<sequence length="440" mass="49150">MKETPLSNCERRFLLRAIEEKKRLDGRQTYDYRNIKISFGTDYGCCIVELGKTRVLGQVSCELVSPKLNRATEGILFFNLELSQMAAPAFEPGRQSDLLVKLNRLLERCLRNSKCIDTESLCVVAGEKVWQIRVDLHLLNHDGNIIDAASIAAIVALCHFRRPDVSVQGDEVTLYTLEERDPVPLSIHHMPICVSFAFFQQGTYLLVDPSEREERVMDGLLVIAMNKHREICTIQSSGGIMLLKDQVLRCSKIAGVKVVEITELIQKALENDQKVRKEGGKFGFVESMANQRITAFKMEKAPIDTSDVEEKAEEIISEAEPPSEVVSKPVLWTPGTAQIGEGIENSWGHLEDSEKEDEDEGGSDEAIILDGMKMDTGVEVSNIGSQDAPIVLSDSEEEEMIILEPDKNPKKIRTQTISATQVKAPSKKPVKKRKKKRAAN</sequence>
<dbReference type="EMBL" id="BC104587">
    <property type="protein sequence ID" value="AAI04588.1"/>
    <property type="molecule type" value="mRNA"/>
</dbReference>
<dbReference type="RefSeq" id="NP_001030225.1">
    <property type="nucleotide sequence ID" value="NM_001035053.1"/>
</dbReference>
<dbReference type="SMR" id="Q3SWZ4"/>
<dbReference type="FunCoup" id="Q3SWZ4">
    <property type="interactions" value="3127"/>
</dbReference>
<dbReference type="STRING" id="9913.ENSBTAP00000006502"/>
<dbReference type="PaxDb" id="9913-ENSBTAP00000006502"/>
<dbReference type="GeneID" id="508005"/>
<dbReference type="KEGG" id="bta:508005"/>
<dbReference type="CTD" id="5393"/>
<dbReference type="eggNOG" id="KOG1614">
    <property type="taxonomic scope" value="Eukaryota"/>
</dbReference>
<dbReference type="InParanoid" id="Q3SWZ4"/>
<dbReference type="OrthoDB" id="10264038at2759"/>
<dbReference type="Proteomes" id="UP000009136">
    <property type="component" value="Unplaced"/>
</dbReference>
<dbReference type="GO" id="GO:0000177">
    <property type="term" value="C:cytoplasmic exosome (RNase complex)"/>
    <property type="evidence" value="ECO:0000318"/>
    <property type="project" value="GO_Central"/>
</dbReference>
<dbReference type="GO" id="GO:0000178">
    <property type="term" value="C:exosome (RNase complex)"/>
    <property type="evidence" value="ECO:0000250"/>
    <property type="project" value="UniProtKB"/>
</dbReference>
<dbReference type="GO" id="GO:0000228">
    <property type="term" value="C:nuclear chromosome"/>
    <property type="evidence" value="ECO:0000250"/>
    <property type="project" value="UniProtKB"/>
</dbReference>
<dbReference type="GO" id="GO:0000176">
    <property type="term" value="C:nuclear exosome (RNase complex)"/>
    <property type="evidence" value="ECO:0000318"/>
    <property type="project" value="GO_Central"/>
</dbReference>
<dbReference type="GO" id="GO:0005730">
    <property type="term" value="C:nucleolus"/>
    <property type="evidence" value="ECO:0000250"/>
    <property type="project" value="UniProtKB"/>
</dbReference>
<dbReference type="GO" id="GO:0005654">
    <property type="term" value="C:nucleoplasm"/>
    <property type="evidence" value="ECO:0000250"/>
    <property type="project" value="UniProtKB"/>
</dbReference>
<dbReference type="GO" id="GO:0035925">
    <property type="term" value="F:mRNA 3'-UTR AU-rich region binding"/>
    <property type="evidence" value="ECO:0000318"/>
    <property type="project" value="GO_Central"/>
</dbReference>
<dbReference type="GO" id="GO:0000467">
    <property type="term" value="P:exonucleolytic trimming to generate mature 3'-end of 5.8S rRNA from tricistronic rRNA transcript (SSU-rRNA, 5.8S rRNA, LSU-rRNA)"/>
    <property type="evidence" value="ECO:0000318"/>
    <property type="project" value="GO_Central"/>
</dbReference>
<dbReference type="GO" id="GO:0071028">
    <property type="term" value="P:nuclear mRNA surveillance"/>
    <property type="evidence" value="ECO:0000318"/>
    <property type="project" value="GO_Central"/>
</dbReference>
<dbReference type="GO" id="GO:0071035">
    <property type="term" value="P:nuclear polyadenylation-dependent rRNA catabolic process"/>
    <property type="evidence" value="ECO:0000318"/>
    <property type="project" value="GO_Central"/>
</dbReference>
<dbReference type="GO" id="GO:0016075">
    <property type="term" value="P:rRNA catabolic process"/>
    <property type="evidence" value="ECO:0000318"/>
    <property type="project" value="GO_Central"/>
</dbReference>
<dbReference type="GO" id="GO:0071038">
    <property type="term" value="P:TRAMP-dependent tRNA surveillance pathway"/>
    <property type="evidence" value="ECO:0000318"/>
    <property type="project" value="GO_Central"/>
</dbReference>
<dbReference type="GO" id="GO:0034473">
    <property type="term" value="P:U1 snRNA 3'-end processing"/>
    <property type="evidence" value="ECO:0000318"/>
    <property type="project" value="GO_Central"/>
</dbReference>
<dbReference type="GO" id="GO:0034475">
    <property type="term" value="P:U4 snRNA 3'-end processing"/>
    <property type="evidence" value="ECO:0000318"/>
    <property type="project" value="GO_Central"/>
</dbReference>
<dbReference type="GO" id="GO:0034476">
    <property type="term" value="P:U5 snRNA 3'-end processing"/>
    <property type="evidence" value="ECO:0000318"/>
    <property type="project" value="GO_Central"/>
</dbReference>
<dbReference type="CDD" id="cd11368">
    <property type="entry name" value="RNase_PH_RRP45"/>
    <property type="match status" value="1"/>
</dbReference>
<dbReference type="FunFam" id="3.30.230.70:FF:000005">
    <property type="entry name" value="Exosome complex component RRP45"/>
    <property type="match status" value="1"/>
</dbReference>
<dbReference type="Gene3D" id="3.30.230.70">
    <property type="entry name" value="GHMP Kinase, N-terminal domain"/>
    <property type="match status" value="1"/>
</dbReference>
<dbReference type="InterPro" id="IPR001247">
    <property type="entry name" value="ExoRNase_PH_dom1"/>
</dbReference>
<dbReference type="InterPro" id="IPR015847">
    <property type="entry name" value="ExoRNase_PH_dom2"/>
</dbReference>
<dbReference type="InterPro" id="IPR036345">
    <property type="entry name" value="ExoRNase_PH_dom2_sf"/>
</dbReference>
<dbReference type="InterPro" id="IPR050590">
    <property type="entry name" value="Exosome_comp_Rrp42_subfam"/>
</dbReference>
<dbReference type="InterPro" id="IPR027408">
    <property type="entry name" value="PNPase/RNase_PH_dom_sf"/>
</dbReference>
<dbReference type="InterPro" id="IPR020568">
    <property type="entry name" value="Ribosomal_Su5_D2-typ_SF"/>
</dbReference>
<dbReference type="InterPro" id="IPR033100">
    <property type="entry name" value="Rrp45"/>
</dbReference>
<dbReference type="PANTHER" id="PTHR11097:SF14">
    <property type="entry name" value="EXOSOME COMPLEX COMPONENT RRP45"/>
    <property type="match status" value="1"/>
</dbReference>
<dbReference type="PANTHER" id="PTHR11097">
    <property type="entry name" value="EXOSOME COMPLEX EXONUCLEASE RIBOSOMAL RNA PROCESSING PROTEIN"/>
    <property type="match status" value="1"/>
</dbReference>
<dbReference type="Pfam" id="PF01138">
    <property type="entry name" value="RNase_PH"/>
    <property type="match status" value="1"/>
</dbReference>
<dbReference type="Pfam" id="PF03725">
    <property type="entry name" value="RNase_PH_C"/>
    <property type="match status" value="1"/>
</dbReference>
<dbReference type="SUPFAM" id="SSF55666">
    <property type="entry name" value="Ribonuclease PH domain 2-like"/>
    <property type="match status" value="1"/>
</dbReference>
<dbReference type="SUPFAM" id="SSF54211">
    <property type="entry name" value="Ribosomal protein S5 domain 2-like"/>
    <property type="match status" value="1"/>
</dbReference>
<organism>
    <name type="scientific">Bos taurus</name>
    <name type="common">Bovine</name>
    <dbReference type="NCBI Taxonomy" id="9913"/>
    <lineage>
        <taxon>Eukaryota</taxon>
        <taxon>Metazoa</taxon>
        <taxon>Chordata</taxon>
        <taxon>Craniata</taxon>
        <taxon>Vertebrata</taxon>
        <taxon>Euteleostomi</taxon>
        <taxon>Mammalia</taxon>
        <taxon>Eutheria</taxon>
        <taxon>Laurasiatheria</taxon>
        <taxon>Artiodactyla</taxon>
        <taxon>Ruminantia</taxon>
        <taxon>Pecora</taxon>
        <taxon>Bovidae</taxon>
        <taxon>Bovinae</taxon>
        <taxon>Bos</taxon>
    </lineage>
</organism>
<gene>
    <name type="primary">EXOSC9</name>
</gene>
<protein>
    <recommendedName>
        <fullName>Exosome complex component RRP45</fullName>
    </recommendedName>
    <alternativeName>
        <fullName>Exosome component 9</fullName>
    </alternativeName>
</protein>
<name>EXOS9_BOVIN</name>
<feature type="chain" id="PRO_0000287542" description="Exosome complex component RRP45">
    <location>
        <begin position="1"/>
        <end position="440"/>
    </location>
</feature>
<feature type="region of interest" description="Disordered" evidence="2">
    <location>
        <begin position="341"/>
        <end position="362"/>
    </location>
</feature>
<feature type="region of interest" description="Disordered" evidence="2">
    <location>
        <begin position="404"/>
        <end position="440"/>
    </location>
</feature>
<feature type="compositionally biased region" description="Acidic residues" evidence="2">
    <location>
        <begin position="353"/>
        <end position="362"/>
    </location>
</feature>
<feature type="compositionally biased region" description="Basic residues" evidence="2">
    <location>
        <begin position="425"/>
        <end position="440"/>
    </location>
</feature>
<feature type="modified residue" description="Phosphoserine" evidence="1">
    <location>
        <position position="65"/>
    </location>
</feature>
<feature type="modified residue" description="N6-acetyllysine; alternate" evidence="1">
    <location>
        <position position="297"/>
    </location>
</feature>
<feature type="modified residue" description="Phosphoserine" evidence="1">
    <location>
        <position position="306"/>
    </location>
</feature>
<feature type="modified residue" description="Phosphoserine" evidence="1">
    <location>
        <position position="346"/>
    </location>
</feature>
<feature type="modified residue" description="Phosphoserine" evidence="1">
    <location>
        <position position="393"/>
    </location>
</feature>
<feature type="modified residue" description="Phosphoserine" evidence="1">
    <location>
        <position position="395"/>
    </location>
</feature>
<feature type="cross-link" description="Glycyl lysine isopeptide (Lys-Gly) (interchain with G-Cter in SUMO1); alternate" evidence="1">
    <location>
        <position position="297"/>
    </location>
</feature>
<feature type="cross-link" description="Glycyl lysine isopeptide (Lys-Gly) (interchain with G-Cter in SUMO2); alternate" evidence="1">
    <location>
        <position position="297"/>
    </location>
</feature>
<accession>Q3SWZ4</accession>
<comment type="function">
    <text evidence="1">Non-catalytic component of the RNA exosome complex which has 3'-&gt;5' exoribonuclease activity and participates in a multitude of cellular RNA processing and degradation events. In the nucleus, the RNA exosome complex is involved in proper maturation of stable RNA species such as rRNA, snRNA and snoRNA, in the elimination of RNA processing by-products and non-coding 'pervasive' transcripts, such as antisense RNA species and promoter-upstream transcripts (PROMPTs), and of mRNAs with processing defects, thereby limiting or excluding their export to the cytoplasm. The RNA exosome may be involved in Ig class switch recombination (CSR) and/or Ig variable region somatic hypermutation (SHM) by targeting AICDA deamination activity to transcribed dsDNA substrates. In the cytoplasm, the RNA exosome complex is involved in general mRNA turnover and specifically degrades inherently unstable mRNAs containing AU-rich elements (AREs) within their 3' untranslated regions, and in RNA surveillance pathways, preventing translation of aberrant mRNAs. It seems to be involved in degradation of histone mRNA. The catalytic inactive RNA exosome core complex of 9 subunits (Exo-9) is proposed to play a pivotal role in the binding and presentation of RNA for ribonucleolysis, and to serve as a scaffold for the association with catalytic subunits and accessory proteins or complexes. EXOSC9 binds to ARE-containing RNAs (By similarity).</text>
</comment>
<comment type="subunit">
    <text evidence="1">Component of the RNA exosome core complex (Exo-9), composed of EXOSC1, EXOSC2, EXOSC3, EXOSC4, EXOSC5, EXOSC6, EXOSC7, EXOSC8 and EXOSC9; within the complex interacts with EXOSC3, EXOSC4, EXOSC5 and DIS3 (By similarity). The catalytically inactive RNA exosome core complex (Exo-9) associates with the catalytic subunit EXOSC10/RRP6 (By similarity). Exo-9 may associate with DIS3 to form the nucleolar exosome complex, or DIS3L to form the cytoplasmic exosome complex (By similarity). Exo-9 is formed by a hexameric base ring consisting of the heterodimers EXOSC4-EXOSC9, EXOSC5-EXOSC8 and EXOSC6-EXOSC7, and a cap ring consisting of EXOSC1, EXOSC2 and EXOSC3 (By similarity). The RNA exosome complex associates with cofactors C1D/RRP47, MPHOSPH6/MPP6 and MTREX/MTR4 (By similarity). Interacts (via C-terminus region) with SETX (via N-terminus domain); the interaction enhances SETX sumoylation (By similarity). Interacts with DIS3; the interaction is direct (By similarity).</text>
</comment>
<comment type="subcellular location">
    <subcellularLocation>
        <location evidence="1">Cytoplasm</location>
    </subcellularLocation>
    <subcellularLocation>
        <location evidence="1">Nucleus</location>
        <location evidence="1">Nucleolus</location>
    </subcellularLocation>
    <subcellularLocation>
        <location evidence="1">Nucleus</location>
    </subcellularLocation>
    <subcellularLocation>
        <location evidence="1">Nucleus</location>
        <location evidence="1">Nucleoplasm</location>
    </subcellularLocation>
    <text evidence="1">Colocalizes with SETX in nuclear foci upon induction of transcription-related DNA damage at the S phase (By similarity).</text>
</comment>
<comment type="similarity">
    <text evidence="3">Belongs to the RNase PH family.</text>
</comment>
<proteinExistence type="evidence at transcript level"/>
<reference key="1">
    <citation type="submission" date="2005-09" db="EMBL/GenBank/DDBJ databases">
        <authorList>
            <consortium name="NIH - Mammalian Gene Collection (MGC) project"/>
        </authorList>
    </citation>
    <scope>NUCLEOTIDE SEQUENCE [LARGE SCALE MRNA]</scope>
    <source>
        <strain>Hereford</strain>
        <tissue>Uterus</tissue>
    </source>
</reference>
<keyword id="KW-0007">Acetylation</keyword>
<keyword id="KW-0963">Cytoplasm</keyword>
<keyword id="KW-0271">Exosome</keyword>
<keyword id="KW-1017">Isopeptide bond</keyword>
<keyword id="KW-0539">Nucleus</keyword>
<keyword id="KW-0597">Phosphoprotein</keyword>
<keyword id="KW-1185">Reference proteome</keyword>
<keyword id="KW-0694">RNA-binding</keyword>
<keyword id="KW-0698">rRNA processing</keyword>
<keyword id="KW-0832">Ubl conjugation</keyword>
<evidence type="ECO:0000250" key="1">
    <source>
        <dbReference type="UniProtKB" id="Q06265"/>
    </source>
</evidence>
<evidence type="ECO:0000256" key="2">
    <source>
        <dbReference type="SAM" id="MobiDB-lite"/>
    </source>
</evidence>
<evidence type="ECO:0000305" key="3"/>